<gene>
    <name evidence="1" type="primary">lepA</name>
    <name type="ordered locus">PST_1228</name>
</gene>
<evidence type="ECO:0000255" key="1">
    <source>
        <dbReference type="HAMAP-Rule" id="MF_00071"/>
    </source>
</evidence>
<feature type="chain" id="PRO_1000032041" description="Elongation factor 4">
    <location>
        <begin position="1"/>
        <end position="599"/>
    </location>
</feature>
<feature type="domain" description="tr-type G">
    <location>
        <begin position="5"/>
        <end position="187"/>
    </location>
</feature>
<feature type="binding site" evidence="1">
    <location>
        <begin position="17"/>
        <end position="22"/>
    </location>
    <ligand>
        <name>GTP</name>
        <dbReference type="ChEBI" id="CHEBI:37565"/>
    </ligand>
</feature>
<feature type="binding site" evidence="1">
    <location>
        <begin position="134"/>
        <end position="137"/>
    </location>
    <ligand>
        <name>GTP</name>
        <dbReference type="ChEBI" id="CHEBI:37565"/>
    </ligand>
</feature>
<dbReference type="EC" id="3.6.5.n1" evidence="1"/>
<dbReference type="EMBL" id="CP000304">
    <property type="protein sequence ID" value="ABP78923.1"/>
    <property type="molecule type" value="Genomic_DNA"/>
</dbReference>
<dbReference type="RefSeq" id="WP_011912409.1">
    <property type="nucleotide sequence ID" value="NC_009434.1"/>
</dbReference>
<dbReference type="SMR" id="A4VIX2"/>
<dbReference type="KEGG" id="psa:PST_1228"/>
<dbReference type="eggNOG" id="COG0481">
    <property type="taxonomic scope" value="Bacteria"/>
</dbReference>
<dbReference type="HOGENOM" id="CLU_009995_3_3_6"/>
<dbReference type="Proteomes" id="UP000000233">
    <property type="component" value="Chromosome"/>
</dbReference>
<dbReference type="GO" id="GO:0005886">
    <property type="term" value="C:plasma membrane"/>
    <property type="evidence" value="ECO:0007669"/>
    <property type="project" value="UniProtKB-SubCell"/>
</dbReference>
<dbReference type="GO" id="GO:0005525">
    <property type="term" value="F:GTP binding"/>
    <property type="evidence" value="ECO:0007669"/>
    <property type="project" value="UniProtKB-UniRule"/>
</dbReference>
<dbReference type="GO" id="GO:0003924">
    <property type="term" value="F:GTPase activity"/>
    <property type="evidence" value="ECO:0007669"/>
    <property type="project" value="UniProtKB-UniRule"/>
</dbReference>
<dbReference type="GO" id="GO:0097216">
    <property type="term" value="F:guanosine tetraphosphate binding"/>
    <property type="evidence" value="ECO:0007669"/>
    <property type="project" value="UniProtKB-ARBA"/>
</dbReference>
<dbReference type="GO" id="GO:0043022">
    <property type="term" value="F:ribosome binding"/>
    <property type="evidence" value="ECO:0007669"/>
    <property type="project" value="UniProtKB-UniRule"/>
</dbReference>
<dbReference type="GO" id="GO:0003746">
    <property type="term" value="F:translation elongation factor activity"/>
    <property type="evidence" value="ECO:0007669"/>
    <property type="project" value="UniProtKB-UniRule"/>
</dbReference>
<dbReference type="GO" id="GO:0045727">
    <property type="term" value="P:positive regulation of translation"/>
    <property type="evidence" value="ECO:0007669"/>
    <property type="project" value="UniProtKB-UniRule"/>
</dbReference>
<dbReference type="CDD" id="cd03699">
    <property type="entry name" value="EF4_II"/>
    <property type="match status" value="1"/>
</dbReference>
<dbReference type="CDD" id="cd16260">
    <property type="entry name" value="EF4_III"/>
    <property type="match status" value="1"/>
</dbReference>
<dbReference type="CDD" id="cd01890">
    <property type="entry name" value="LepA"/>
    <property type="match status" value="1"/>
</dbReference>
<dbReference type="CDD" id="cd03709">
    <property type="entry name" value="lepA_C"/>
    <property type="match status" value="1"/>
</dbReference>
<dbReference type="FunFam" id="3.40.50.300:FF:000078">
    <property type="entry name" value="Elongation factor 4"/>
    <property type="match status" value="1"/>
</dbReference>
<dbReference type="FunFam" id="2.40.30.10:FF:000015">
    <property type="entry name" value="Translation factor GUF1, mitochondrial"/>
    <property type="match status" value="1"/>
</dbReference>
<dbReference type="FunFam" id="3.30.70.240:FF:000007">
    <property type="entry name" value="Translation factor GUF1, mitochondrial"/>
    <property type="match status" value="1"/>
</dbReference>
<dbReference type="FunFam" id="3.30.70.2570:FF:000001">
    <property type="entry name" value="Translation factor GUF1, mitochondrial"/>
    <property type="match status" value="1"/>
</dbReference>
<dbReference type="FunFam" id="3.30.70.870:FF:000004">
    <property type="entry name" value="Translation factor GUF1, mitochondrial"/>
    <property type="match status" value="1"/>
</dbReference>
<dbReference type="Gene3D" id="3.30.70.240">
    <property type="match status" value="1"/>
</dbReference>
<dbReference type="Gene3D" id="3.30.70.2570">
    <property type="entry name" value="Elongation factor 4, C-terminal domain"/>
    <property type="match status" value="1"/>
</dbReference>
<dbReference type="Gene3D" id="3.30.70.870">
    <property type="entry name" value="Elongation Factor G (Translational Gtpase), domain 3"/>
    <property type="match status" value="1"/>
</dbReference>
<dbReference type="Gene3D" id="3.40.50.300">
    <property type="entry name" value="P-loop containing nucleotide triphosphate hydrolases"/>
    <property type="match status" value="1"/>
</dbReference>
<dbReference type="Gene3D" id="2.40.30.10">
    <property type="entry name" value="Translation factors"/>
    <property type="match status" value="1"/>
</dbReference>
<dbReference type="HAMAP" id="MF_00071">
    <property type="entry name" value="LepA"/>
    <property type="match status" value="1"/>
</dbReference>
<dbReference type="InterPro" id="IPR006297">
    <property type="entry name" value="EF-4"/>
</dbReference>
<dbReference type="InterPro" id="IPR035647">
    <property type="entry name" value="EFG_III/V"/>
</dbReference>
<dbReference type="InterPro" id="IPR000640">
    <property type="entry name" value="EFG_V-like"/>
</dbReference>
<dbReference type="InterPro" id="IPR004161">
    <property type="entry name" value="EFTu-like_2"/>
</dbReference>
<dbReference type="InterPro" id="IPR038363">
    <property type="entry name" value="LepA_C_sf"/>
</dbReference>
<dbReference type="InterPro" id="IPR013842">
    <property type="entry name" value="LepA_CTD"/>
</dbReference>
<dbReference type="InterPro" id="IPR035654">
    <property type="entry name" value="LepA_IV"/>
</dbReference>
<dbReference type="InterPro" id="IPR027417">
    <property type="entry name" value="P-loop_NTPase"/>
</dbReference>
<dbReference type="InterPro" id="IPR005225">
    <property type="entry name" value="Small_GTP-bd"/>
</dbReference>
<dbReference type="InterPro" id="IPR000795">
    <property type="entry name" value="T_Tr_GTP-bd_dom"/>
</dbReference>
<dbReference type="NCBIfam" id="TIGR01393">
    <property type="entry name" value="lepA"/>
    <property type="match status" value="1"/>
</dbReference>
<dbReference type="NCBIfam" id="TIGR00231">
    <property type="entry name" value="small_GTP"/>
    <property type="match status" value="1"/>
</dbReference>
<dbReference type="PANTHER" id="PTHR43512:SF4">
    <property type="entry name" value="TRANSLATION FACTOR GUF1 HOMOLOG, CHLOROPLASTIC"/>
    <property type="match status" value="1"/>
</dbReference>
<dbReference type="PANTHER" id="PTHR43512">
    <property type="entry name" value="TRANSLATION FACTOR GUF1-RELATED"/>
    <property type="match status" value="1"/>
</dbReference>
<dbReference type="Pfam" id="PF00679">
    <property type="entry name" value="EFG_C"/>
    <property type="match status" value="1"/>
</dbReference>
<dbReference type="Pfam" id="PF00009">
    <property type="entry name" value="GTP_EFTU"/>
    <property type="match status" value="1"/>
</dbReference>
<dbReference type="Pfam" id="PF03144">
    <property type="entry name" value="GTP_EFTU_D2"/>
    <property type="match status" value="1"/>
</dbReference>
<dbReference type="Pfam" id="PF06421">
    <property type="entry name" value="LepA_C"/>
    <property type="match status" value="1"/>
</dbReference>
<dbReference type="PRINTS" id="PR00315">
    <property type="entry name" value="ELONGATNFCT"/>
</dbReference>
<dbReference type="SUPFAM" id="SSF54980">
    <property type="entry name" value="EF-G C-terminal domain-like"/>
    <property type="match status" value="2"/>
</dbReference>
<dbReference type="SUPFAM" id="SSF52540">
    <property type="entry name" value="P-loop containing nucleoside triphosphate hydrolases"/>
    <property type="match status" value="1"/>
</dbReference>
<dbReference type="PROSITE" id="PS51722">
    <property type="entry name" value="G_TR_2"/>
    <property type="match status" value="1"/>
</dbReference>
<keyword id="KW-0997">Cell inner membrane</keyword>
<keyword id="KW-1003">Cell membrane</keyword>
<keyword id="KW-0342">GTP-binding</keyword>
<keyword id="KW-0378">Hydrolase</keyword>
<keyword id="KW-0472">Membrane</keyword>
<keyword id="KW-0547">Nucleotide-binding</keyword>
<keyword id="KW-0648">Protein biosynthesis</keyword>
<keyword id="KW-1185">Reference proteome</keyword>
<comment type="function">
    <text evidence="1">Required for accurate and efficient protein synthesis under certain stress conditions. May act as a fidelity factor of the translation reaction, by catalyzing a one-codon backward translocation of tRNAs on improperly translocated ribosomes. Back-translocation proceeds from a post-translocation (POST) complex to a pre-translocation (PRE) complex, thus giving elongation factor G a second chance to translocate the tRNAs correctly. Binds to ribosomes in a GTP-dependent manner.</text>
</comment>
<comment type="catalytic activity">
    <reaction evidence="1">
        <text>GTP + H2O = GDP + phosphate + H(+)</text>
        <dbReference type="Rhea" id="RHEA:19669"/>
        <dbReference type="ChEBI" id="CHEBI:15377"/>
        <dbReference type="ChEBI" id="CHEBI:15378"/>
        <dbReference type="ChEBI" id="CHEBI:37565"/>
        <dbReference type="ChEBI" id="CHEBI:43474"/>
        <dbReference type="ChEBI" id="CHEBI:58189"/>
        <dbReference type="EC" id="3.6.5.n1"/>
    </reaction>
</comment>
<comment type="subcellular location">
    <subcellularLocation>
        <location evidence="1">Cell inner membrane</location>
        <topology evidence="1">Peripheral membrane protein</topology>
        <orientation evidence="1">Cytoplasmic side</orientation>
    </subcellularLocation>
</comment>
<comment type="similarity">
    <text evidence="1">Belongs to the TRAFAC class translation factor GTPase superfamily. Classic translation factor GTPase family. LepA subfamily.</text>
</comment>
<reference key="1">
    <citation type="journal article" date="2008" name="Proc. Natl. Acad. Sci. U.S.A.">
        <title>Nitrogen fixation island and rhizosphere competence traits in the genome of root-associated Pseudomonas stutzeri A1501.</title>
        <authorList>
            <person name="Yan Y."/>
            <person name="Yang J."/>
            <person name="Dou Y."/>
            <person name="Chen M."/>
            <person name="Ping S."/>
            <person name="Peng J."/>
            <person name="Lu W."/>
            <person name="Zhang W."/>
            <person name="Yao Z."/>
            <person name="Li H."/>
            <person name="Liu W."/>
            <person name="He S."/>
            <person name="Geng L."/>
            <person name="Zhang X."/>
            <person name="Yang F."/>
            <person name="Yu H."/>
            <person name="Zhan Y."/>
            <person name="Li D."/>
            <person name="Lin Z."/>
            <person name="Wang Y."/>
            <person name="Elmerich C."/>
            <person name="Lin M."/>
            <person name="Jin Q."/>
        </authorList>
    </citation>
    <scope>NUCLEOTIDE SEQUENCE [LARGE SCALE GENOMIC DNA]</scope>
    <source>
        <strain>A1501</strain>
    </source>
</reference>
<sequence length="599" mass="66299">MSDLSHIRNFSIIAHIDHGKSTLADRFIQMCGGLSEREMAAQVLDSMDLERERGITIKAHSVTLHYKARDGKTYQLNFIDTPGHVDFTYEVSRSLAACEGALLVVDAGQGVEAQSVANCYTAIEQGLEVMPVLNKMDLPQAEPERVKEEIEHIIGIDATDAVACSAKSGMGVDEVLERLVAVIPPPTGDIEAPLQALIIDSWFDNYLGVVSLVRVRHGRIKKGDKVLVKSTGKVHQVDSVGVFTPKHSATADLKAGEVGFIIAGIKDIHGAPVGDTLTLSSTPDVEMLPGFQRIKPQVYAGLFPVSSDDFEDFREALQKLTLNDAALQYEPESSEALGFGFRIGFLGMLHMEIIQERLEREYDLDLITTAPTVVYELLLKNGDTIYVDNPSRLPDLSFIEDMREPIVQANILVPQDHLGNVITLCIEKRGVQRDMQFLGSQVQVRYDLPMSEVVLDFFDRLKSVSRGYASLDYSFVRFQSANLVKLDVLINGEKVDALALIVHRDNAHYKGRQLTEKMKELIPRQMFDVAIQAAIGGQIVARTTVKALRKNVLAKCYGGDVSRKRKLLEKQKAGKKRMKQVGSVEIPQEAFLAVLKVDS</sequence>
<protein>
    <recommendedName>
        <fullName evidence="1">Elongation factor 4</fullName>
        <shortName evidence="1">EF-4</shortName>
        <ecNumber evidence="1">3.6.5.n1</ecNumber>
    </recommendedName>
    <alternativeName>
        <fullName evidence="1">Ribosomal back-translocase LepA</fullName>
    </alternativeName>
</protein>
<accession>A4VIX2</accession>
<proteinExistence type="inferred from homology"/>
<name>LEPA_STUS1</name>
<organism>
    <name type="scientific">Stutzerimonas stutzeri (strain A1501)</name>
    <name type="common">Pseudomonas stutzeri</name>
    <dbReference type="NCBI Taxonomy" id="379731"/>
    <lineage>
        <taxon>Bacteria</taxon>
        <taxon>Pseudomonadati</taxon>
        <taxon>Pseudomonadota</taxon>
        <taxon>Gammaproteobacteria</taxon>
        <taxon>Pseudomonadales</taxon>
        <taxon>Pseudomonadaceae</taxon>
        <taxon>Stutzerimonas</taxon>
    </lineage>
</organism>